<evidence type="ECO:0000255" key="1">
    <source>
        <dbReference type="HAMAP-Rule" id="MF_00006"/>
    </source>
</evidence>
<sequence length="477" mass="51285">MSSNSGDVRLWGGRFADGPAEALAKLSASVHFDWRLAPYDIAGSRAHARVLHKANLLTDDELDRMLAGLDRLEADVADGTFVGTIADEDVHTALERGLLERLGPDLGGKLRAGRSRNDQVATLFRMYLRDHARVIGGLLADLQDALIGLAEAHPDVAMPGRTHLQHAQPVLFAHHVLAHVQALSRDAERLRQWDERTAVSPYGSGALAGSSLGLDPESVAKDLGFEHGSVANSIDGTASRDFVAEFAFITAMIGVNLSRIAEEVIIWNTKEFSFVTLHDAFSTGSSIMPQKKNPDIAELARGKSGRLIGNLTGLMATLKALPLAYNRDLQEDKEPVFDSCDQLEVLLPAFTGMMATLTVHRERMEELAPAGFSLATDIAEWLVKQGVPFRVAHEVAGECVKVAEGEGIELDGLTDEQFAKISSHLTPEVRGVLNVPGALASRDGRGGTAPSAVAVQLAEVRTDVAAQHAWATAKQKN</sequence>
<organism>
    <name type="scientific">Streptomyces avermitilis (strain ATCC 31267 / DSM 46492 / JCM 5070 / NBRC 14893 / NCIMB 12804 / NRRL 8165 / MA-4680)</name>
    <dbReference type="NCBI Taxonomy" id="227882"/>
    <lineage>
        <taxon>Bacteria</taxon>
        <taxon>Bacillati</taxon>
        <taxon>Actinomycetota</taxon>
        <taxon>Actinomycetes</taxon>
        <taxon>Kitasatosporales</taxon>
        <taxon>Streptomycetaceae</taxon>
        <taxon>Streptomyces</taxon>
    </lineage>
</organism>
<reference key="1">
    <citation type="journal article" date="2001" name="Proc. Natl. Acad. Sci. U.S.A.">
        <title>Genome sequence of an industrial microorganism Streptomyces avermitilis: deducing the ability of producing secondary metabolites.</title>
        <authorList>
            <person name="Omura S."/>
            <person name="Ikeda H."/>
            <person name="Ishikawa J."/>
            <person name="Hanamoto A."/>
            <person name="Takahashi C."/>
            <person name="Shinose M."/>
            <person name="Takahashi Y."/>
            <person name="Horikawa H."/>
            <person name="Nakazawa H."/>
            <person name="Osonoe T."/>
            <person name="Kikuchi H."/>
            <person name="Shiba T."/>
            <person name="Sakaki Y."/>
            <person name="Hattori M."/>
        </authorList>
    </citation>
    <scope>NUCLEOTIDE SEQUENCE [LARGE SCALE GENOMIC DNA]</scope>
    <source>
        <strain>ATCC 31267 / DSM 46492 / JCM 5070 / NBRC 14893 / NCIMB 12804 / NRRL 8165 / MA-4680</strain>
    </source>
</reference>
<reference key="2">
    <citation type="journal article" date="2003" name="Nat. Biotechnol.">
        <title>Complete genome sequence and comparative analysis of the industrial microorganism Streptomyces avermitilis.</title>
        <authorList>
            <person name="Ikeda H."/>
            <person name="Ishikawa J."/>
            <person name="Hanamoto A."/>
            <person name="Shinose M."/>
            <person name="Kikuchi H."/>
            <person name="Shiba T."/>
            <person name="Sakaki Y."/>
            <person name="Hattori M."/>
            <person name="Omura S."/>
        </authorList>
    </citation>
    <scope>NUCLEOTIDE SEQUENCE [LARGE SCALE GENOMIC DNA]</scope>
    <source>
        <strain>ATCC 31267 / DSM 46492 / JCM 5070 / NBRC 14893 / NCIMB 12804 / NRRL 8165 / MA-4680</strain>
    </source>
</reference>
<protein>
    <recommendedName>
        <fullName evidence="1">Argininosuccinate lyase</fullName>
        <shortName evidence="1">ASAL</shortName>
        <ecNumber evidence="1">4.3.2.1</ecNumber>
    </recommendedName>
    <alternativeName>
        <fullName evidence="1">Arginosuccinase</fullName>
    </alternativeName>
</protein>
<name>ARLY_STRAW</name>
<dbReference type="EC" id="4.3.2.1" evidence="1"/>
<dbReference type="EMBL" id="BA000030">
    <property type="protein sequence ID" value="BAC74490.1"/>
    <property type="molecule type" value="Genomic_DNA"/>
</dbReference>
<dbReference type="RefSeq" id="WP_010988178.1">
    <property type="nucleotide sequence ID" value="NZ_JZJK01000082.1"/>
</dbReference>
<dbReference type="SMR" id="Q827Z0"/>
<dbReference type="GeneID" id="41543847"/>
<dbReference type="KEGG" id="sma:SAVERM_6779"/>
<dbReference type="eggNOG" id="COG0165">
    <property type="taxonomic scope" value="Bacteria"/>
</dbReference>
<dbReference type="HOGENOM" id="CLU_027272_2_3_11"/>
<dbReference type="OrthoDB" id="9769623at2"/>
<dbReference type="UniPathway" id="UPA00068">
    <property type="reaction ID" value="UER00114"/>
</dbReference>
<dbReference type="Proteomes" id="UP000000428">
    <property type="component" value="Chromosome"/>
</dbReference>
<dbReference type="GO" id="GO:0005829">
    <property type="term" value="C:cytosol"/>
    <property type="evidence" value="ECO:0007669"/>
    <property type="project" value="TreeGrafter"/>
</dbReference>
<dbReference type="GO" id="GO:0004056">
    <property type="term" value="F:argininosuccinate lyase activity"/>
    <property type="evidence" value="ECO:0007669"/>
    <property type="project" value="UniProtKB-UniRule"/>
</dbReference>
<dbReference type="GO" id="GO:0042450">
    <property type="term" value="P:arginine biosynthetic process via ornithine"/>
    <property type="evidence" value="ECO:0007669"/>
    <property type="project" value="InterPro"/>
</dbReference>
<dbReference type="GO" id="GO:0006526">
    <property type="term" value="P:L-arginine biosynthetic process"/>
    <property type="evidence" value="ECO:0007669"/>
    <property type="project" value="UniProtKB-UniRule"/>
</dbReference>
<dbReference type="CDD" id="cd01359">
    <property type="entry name" value="Argininosuccinate_lyase"/>
    <property type="match status" value="1"/>
</dbReference>
<dbReference type="FunFam" id="1.10.275.10:FF:000002">
    <property type="entry name" value="Argininosuccinate lyase"/>
    <property type="match status" value="1"/>
</dbReference>
<dbReference type="FunFam" id="1.10.40.30:FF:000001">
    <property type="entry name" value="Argininosuccinate lyase"/>
    <property type="match status" value="1"/>
</dbReference>
<dbReference type="FunFam" id="1.20.200.10:FF:000002">
    <property type="entry name" value="Argininosuccinate lyase"/>
    <property type="match status" value="1"/>
</dbReference>
<dbReference type="Gene3D" id="1.10.40.30">
    <property type="entry name" value="Fumarase/aspartase (C-terminal domain)"/>
    <property type="match status" value="1"/>
</dbReference>
<dbReference type="Gene3D" id="1.20.200.10">
    <property type="entry name" value="Fumarase/aspartase (Central domain)"/>
    <property type="match status" value="1"/>
</dbReference>
<dbReference type="Gene3D" id="1.10.275.10">
    <property type="entry name" value="Fumarase/aspartase (N-terminal domain)"/>
    <property type="match status" value="1"/>
</dbReference>
<dbReference type="HAMAP" id="MF_00006">
    <property type="entry name" value="Arg_succ_lyase"/>
    <property type="match status" value="1"/>
</dbReference>
<dbReference type="InterPro" id="IPR029419">
    <property type="entry name" value="Arg_succ_lyase_C"/>
</dbReference>
<dbReference type="InterPro" id="IPR009049">
    <property type="entry name" value="Argininosuccinate_lyase"/>
</dbReference>
<dbReference type="InterPro" id="IPR024083">
    <property type="entry name" value="Fumarase/histidase_N"/>
</dbReference>
<dbReference type="InterPro" id="IPR020557">
    <property type="entry name" value="Fumarate_lyase_CS"/>
</dbReference>
<dbReference type="InterPro" id="IPR000362">
    <property type="entry name" value="Fumarate_lyase_fam"/>
</dbReference>
<dbReference type="InterPro" id="IPR022761">
    <property type="entry name" value="Fumarate_lyase_N"/>
</dbReference>
<dbReference type="InterPro" id="IPR008948">
    <property type="entry name" value="L-Aspartase-like"/>
</dbReference>
<dbReference type="NCBIfam" id="TIGR00838">
    <property type="entry name" value="argH"/>
    <property type="match status" value="1"/>
</dbReference>
<dbReference type="PANTHER" id="PTHR43814">
    <property type="entry name" value="ARGININOSUCCINATE LYASE"/>
    <property type="match status" value="1"/>
</dbReference>
<dbReference type="PANTHER" id="PTHR43814:SF1">
    <property type="entry name" value="ARGININOSUCCINATE LYASE"/>
    <property type="match status" value="1"/>
</dbReference>
<dbReference type="Pfam" id="PF14698">
    <property type="entry name" value="ASL_C2"/>
    <property type="match status" value="1"/>
</dbReference>
<dbReference type="Pfam" id="PF00206">
    <property type="entry name" value="Lyase_1"/>
    <property type="match status" value="1"/>
</dbReference>
<dbReference type="PRINTS" id="PR00145">
    <property type="entry name" value="ARGSUCLYASE"/>
</dbReference>
<dbReference type="PRINTS" id="PR00149">
    <property type="entry name" value="FUMRATELYASE"/>
</dbReference>
<dbReference type="SUPFAM" id="SSF48557">
    <property type="entry name" value="L-aspartase-like"/>
    <property type="match status" value="1"/>
</dbReference>
<dbReference type="PROSITE" id="PS00163">
    <property type="entry name" value="FUMARATE_LYASES"/>
    <property type="match status" value="1"/>
</dbReference>
<gene>
    <name evidence="1" type="primary">argH</name>
    <name type="ordered locus">SAV_6779</name>
</gene>
<comment type="catalytic activity">
    <reaction evidence="1">
        <text>2-(N(omega)-L-arginino)succinate = fumarate + L-arginine</text>
        <dbReference type="Rhea" id="RHEA:24020"/>
        <dbReference type="ChEBI" id="CHEBI:29806"/>
        <dbReference type="ChEBI" id="CHEBI:32682"/>
        <dbReference type="ChEBI" id="CHEBI:57472"/>
        <dbReference type="EC" id="4.3.2.1"/>
    </reaction>
</comment>
<comment type="pathway">
    <text evidence="1">Amino-acid biosynthesis; L-arginine biosynthesis; L-arginine from L-ornithine and carbamoyl phosphate: step 3/3.</text>
</comment>
<comment type="subcellular location">
    <subcellularLocation>
        <location evidence="1">Cytoplasm</location>
    </subcellularLocation>
</comment>
<comment type="similarity">
    <text evidence="1">Belongs to the lyase 1 family. Argininosuccinate lyase subfamily.</text>
</comment>
<proteinExistence type="inferred from homology"/>
<keyword id="KW-0028">Amino-acid biosynthesis</keyword>
<keyword id="KW-0055">Arginine biosynthesis</keyword>
<keyword id="KW-0963">Cytoplasm</keyword>
<keyword id="KW-0456">Lyase</keyword>
<keyword id="KW-1185">Reference proteome</keyword>
<accession>Q827Z0</accession>
<feature type="chain" id="PRO_0000137831" description="Argininosuccinate lyase">
    <location>
        <begin position="1"/>
        <end position="477"/>
    </location>
</feature>